<reference key="1">
    <citation type="journal article" date="2010" name="Genome Biol. Evol.">
        <title>Continuing evolution of Burkholderia mallei through genome reduction and large-scale rearrangements.</title>
        <authorList>
            <person name="Losada L."/>
            <person name="Ronning C.M."/>
            <person name="DeShazer D."/>
            <person name="Woods D."/>
            <person name="Fedorova N."/>
            <person name="Kim H.S."/>
            <person name="Shabalina S.A."/>
            <person name="Pearson T.R."/>
            <person name="Brinkac L."/>
            <person name="Tan P."/>
            <person name="Nandi T."/>
            <person name="Crabtree J."/>
            <person name="Badger J."/>
            <person name="Beckstrom-Sternberg S."/>
            <person name="Saqib M."/>
            <person name="Schutzer S.E."/>
            <person name="Keim P."/>
            <person name="Nierman W.C."/>
        </authorList>
    </citation>
    <scope>NUCLEOTIDE SEQUENCE [LARGE SCALE GENOMIC DNA]</scope>
    <source>
        <strain>SAVP1</strain>
    </source>
</reference>
<dbReference type="EC" id="2.3.1.47" evidence="1"/>
<dbReference type="EMBL" id="CP000526">
    <property type="protein sequence ID" value="ABM51413.1"/>
    <property type="molecule type" value="Genomic_DNA"/>
</dbReference>
<dbReference type="RefSeq" id="WP_004189736.1">
    <property type="nucleotide sequence ID" value="NC_008785.1"/>
</dbReference>
<dbReference type="SMR" id="A1V819"/>
<dbReference type="GeneID" id="93058884"/>
<dbReference type="KEGG" id="bmv:BMASAVP1_A3079"/>
<dbReference type="HOGENOM" id="CLU_015846_11_2_4"/>
<dbReference type="UniPathway" id="UPA00078"/>
<dbReference type="GO" id="GO:0008710">
    <property type="term" value="F:8-amino-7-oxononanoate synthase activity"/>
    <property type="evidence" value="ECO:0007669"/>
    <property type="project" value="UniProtKB-UniRule"/>
</dbReference>
<dbReference type="GO" id="GO:0030170">
    <property type="term" value="F:pyridoxal phosphate binding"/>
    <property type="evidence" value="ECO:0007669"/>
    <property type="project" value="UniProtKB-UniRule"/>
</dbReference>
<dbReference type="GO" id="GO:0009102">
    <property type="term" value="P:biotin biosynthetic process"/>
    <property type="evidence" value="ECO:0007669"/>
    <property type="project" value="UniProtKB-UniRule"/>
</dbReference>
<dbReference type="Gene3D" id="3.90.1150.10">
    <property type="entry name" value="Aspartate Aminotransferase, domain 1"/>
    <property type="match status" value="1"/>
</dbReference>
<dbReference type="Gene3D" id="3.40.640.10">
    <property type="entry name" value="Type I PLP-dependent aspartate aminotransferase-like (Major domain)"/>
    <property type="match status" value="1"/>
</dbReference>
<dbReference type="HAMAP" id="MF_01693">
    <property type="entry name" value="BioF_aminotrans_2"/>
    <property type="match status" value="1"/>
</dbReference>
<dbReference type="InterPro" id="IPR004839">
    <property type="entry name" value="Aminotransferase_I/II_large"/>
</dbReference>
<dbReference type="InterPro" id="IPR050087">
    <property type="entry name" value="AON_synthase_class-II"/>
</dbReference>
<dbReference type="InterPro" id="IPR004723">
    <property type="entry name" value="AONS_Archaea/Proteobacteria"/>
</dbReference>
<dbReference type="InterPro" id="IPR022834">
    <property type="entry name" value="AONS_Proteobacteria"/>
</dbReference>
<dbReference type="InterPro" id="IPR015424">
    <property type="entry name" value="PyrdxlP-dep_Trfase"/>
</dbReference>
<dbReference type="InterPro" id="IPR015421">
    <property type="entry name" value="PyrdxlP-dep_Trfase_major"/>
</dbReference>
<dbReference type="InterPro" id="IPR015422">
    <property type="entry name" value="PyrdxlP-dep_Trfase_small"/>
</dbReference>
<dbReference type="NCBIfam" id="TIGR00858">
    <property type="entry name" value="bioF"/>
    <property type="match status" value="1"/>
</dbReference>
<dbReference type="PANTHER" id="PTHR13693:SF100">
    <property type="entry name" value="8-AMINO-7-OXONONANOATE SYNTHASE"/>
    <property type="match status" value="1"/>
</dbReference>
<dbReference type="PANTHER" id="PTHR13693">
    <property type="entry name" value="CLASS II AMINOTRANSFERASE/8-AMINO-7-OXONONANOATE SYNTHASE"/>
    <property type="match status" value="1"/>
</dbReference>
<dbReference type="Pfam" id="PF00155">
    <property type="entry name" value="Aminotran_1_2"/>
    <property type="match status" value="1"/>
</dbReference>
<dbReference type="SUPFAM" id="SSF53383">
    <property type="entry name" value="PLP-dependent transferases"/>
    <property type="match status" value="1"/>
</dbReference>
<feature type="chain" id="PRO_0000380937" description="8-amino-7-oxononanoate synthase">
    <location>
        <begin position="1"/>
        <end position="394"/>
    </location>
</feature>
<feature type="binding site" evidence="1">
    <location>
        <position position="21"/>
    </location>
    <ligand>
        <name>substrate</name>
    </ligand>
</feature>
<feature type="binding site" evidence="1">
    <location>
        <begin position="112"/>
        <end position="113"/>
    </location>
    <ligand>
        <name>pyridoxal 5'-phosphate</name>
        <dbReference type="ChEBI" id="CHEBI:597326"/>
    </ligand>
</feature>
<feature type="binding site" evidence="1">
    <location>
        <position position="137"/>
    </location>
    <ligand>
        <name>substrate</name>
    </ligand>
</feature>
<feature type="binding site" evidence="1">
    <location>
        <position position="183"/>
    </location>
    <ligand>
        <name>pyridoxal 5'-phosphate</name>
        <dbReference type="ChEBI" id="CHEBI:597326"/>
    </ligand>
</feature>
<feature type="binding site" evidence="1">
    <location>
        <position position="211"/>
    </location>
    <ligand>
        <name>pyridoxal 5'-phosphate</name>
        <dbReference type="ChEBI" id="CHEBI:597326"/>
    </ligand>
</feature>
<feature type="binding site" evidence="1">
    <location>
        <position position="239"/>
    </location>
    <ligand>
        <name>pyridoxal 5'-phosphate</name>
        <dbReference type="ChEBI" id="CHEBI:597326"/>
    </ligand>
</feature>
<feature type="binding site" evidence="1">
    <location>
        <position position="358"/>
    </location>
    <ligand>
        <name>substrate</name>
    </ligand>
</feature>
<feature type="modified residue" description="N6-(pyridoxal phosphate)lysine" evidence="1">
    <location>
        <position position="242"/>
    </location>
</feature>
<evidence type="ECO:0000255" key="1">
    <source>
        <dbReference type="HAMAP-Rule" id="MF_01693"/>
    </source>
</evidence>
<proteinExistence type="inferred from homology"/>
<sequence>MNPLATLEQGLADIDAQGLRRCRRVADTACGAHMTVDGRAIIGFASNDYLGLAAHPRLVEAFAEGARRYGSGSGGSHLLGGHSRAHATLEDELAAFSGGFSDAPRALYFSTGYMANLAALTALAGRGATIFSDALNHASLIDGARLSRANVQIYPHGDADALDARLRACDAPTKLIVSDTVFSMDGDVAPLARLVALAETHGAWLVVDDAHGFGVLGPQGRGALAAHGLRSPNLVYVGTLGKAAGVAGAFVVAHETVIEWLVQRARSYIFTTAAPPSVACAVSASLAVIASDEGDARRAHLGALIKRTRAILRATHWQPVDSHTAVQPLVIGSNEATLAAMAALDAQGLWVPAIRPPTVPAGTSRLRISLSAAHSFDDLARLEAALVTPIGAAA</sequence>
<name>BIOF_BURMS</name>
<accession>A1V819</accession>
<gene>
    <name evidence="1" type="primary">bioF</name>
    <name type="ordered locus">BMASAVP1_A3079</name>
</gene>
<organism>
    <name type="scientific">Burkholderia mallei (strain SAVP1)</name>
    <dbReference type="NCBI Taxonomy" id="320388"/>
    <lineage>
        <taxon>Bacteria</taxon>
        <taxon>Pseudomonadati</taxon>
        <taxon>Pseudomonadota</taxon>
        <taxon>Betaproteobacteria</taxon>
        <taxon>Burkholderiales</taxon>
        <taxon>Burkholderiaceae</taxon>
        <taxon>Burkholderia</taxon>
        <taxon>pseudomallei group</taxon>
    </lineage>
</organism>
<comment type="function">
    <text evidence="1">Catalyzes the decarboxylative condensation of pimeloyl-[acyl-carrier protein] and L-alanine to produce 8-amino-7-oxononanoate (AON), [acyl-carrier protein], and carbon dioxide.</text>
</comment>
<comment type="catalytic activity">
    <reaction evidence="1">
        <text>6-carboxyhexanoyl-[ACP] + L-alanine + H(+) = (8S)-8-amino-7-oxononanoate + holo-[ACP] + CO2</text>
        <dbReference type="Rhea" id="RHEA:42288"/>
        <dbReference type="Rhea" id="RHEA-COMP:9685"/>
        <dbReference type="Rhea" id="RHEA-COMP:9955"/>
        <dbReference type="ChEBI" id="CHEBI:15378"/>
        <dbReference type="ChEBI" id="CHEBI:16526"/>
        <dbReference type="ChEBI" id="CHEBI:57972"/>
        <dbReference type="ChEBI" id="CHEBI:64479"/>
        <dbReference type="ChEBI" id="CHEBI:78846"/>
        <dbReference type="ChEBI" id="CHEBI:149468"/>
        <dbReference type="EC" id="2.3.1.47"/>
    </reaction>
</comment>
<comment type="cofactor">
    <cofactor evidence="1">
        <name>pyridoxal 5'-phosphate</name>
        <dbReference type="ChEBI" id="CHEBI:597326"/>
    </cofactor>
</comment>
<comment type="pathway">
    <text evidence="1">Cofactor biosynthesis; biotin biosynthesis.</text>
</comment>
<comment type="subunit">
    <text evidence="1">Homodimer.</text>
</comment>
<comment type="similarity">
    <text evidence="1">Belongs to the class-II pyridoxal-phosphate-dependent aminotransferase family. BioF subfamily.</text>
</comment>
<keyword id="KW-0093">Biotin biosynthesis</keyword>
<keyword id="KW-0663">Pyridoxal phosphate</keyword>
<keyword id="KW-0808">Transferase</keyword>
<protein>
    <recommendedName>
        <fullName evidence="1">8-amino-7-oxononanoate synthase</fullName>
        <shortName evidence="1">AONS</shortName>
        <ecNumber evidence="1">2.3.1.47</ecNumber>
    </recommendedName>
    <alternativeName>
        <fullName evidence="1">7-keto-8-amino-pelargonic acid synthase</fullName>
        <shortName evidence="1">7-KAP synthase</shortName>
        <shortName evidence="1">KAPA synthase</shortName>
    </alternativeName>
    <alternativeName>
        <fullName evidence="1">8-amino-7-ketopelargonate synthase</fullName>
    </alternativeName>
</protein>